<gene>
    <name type="primary">ptsH</name>
    <name type="ordered locus">SACOL1091</name>
</gene>
<sequence>MEQNSYVIIDETGIHARPATMLVQTASKFDSDIQLEYNGKKVNLKSIMGVMSLGVGKDAEITIYADGSDESDAIQAISDVLSKEGLTK</sequence>
<comment type="function">
    <text evidence="1">General (non sugar-specific) component of the phosphoenolpyruvate-dependent sugar phosphotransferase system (sugar PTS). This major carbohydrate active-transport system catalyzes the phosphorylation of incoming sugar substrates concomitantly with their translocation across the cell membrane. The phosphoryl group from phosphoenolpyruvate (PEP) is transferred to the phosphoryl carrier protein HPr by enzyme I. Phospho-HPr then transfers it to the PTS EIIA domain.</text>
</comment>
<comment type="function">
    <text evidence="1">P-Ser-HPr interacts with the catabolite control protein A (CcpA), forming a complex that binds to DNA at the catabolite response elements cre, operator sites preceding a large number of catabolite-regulated genes. Thus, P-Ser-HPr is a corepressor in carbon catabolite repression (CCR), a mechanism that allows bacteria to coordinate and optimize the utilization of available carbon sources. P-Ser-HPr also plays a role in inducer exclusion, in which it probably interacts with several non-PTS permeases and inhibits their transport activity (By similarity).</text>
</comment>
<comment type="activity regulation">
    <text evidence="1">Phosphorylation on Ser-46 inhibits the phosphoryl transfer from enzyme I to HPr.</text>
</comment>
<comment type="subcellular location">
    <subcellularLocation>
        <location evidence="1">Cytoplasm</location>
    </subcellularLocation>
</comment>
<comment type="similarity">
    <text evidence="3">Belongs to the HPr family.</text>
</comment>
<reference key="1">
    <citation type="journal article" date="2005" name="J. Bacteriol.">
        <title>Insights on evolution of virulence and resistance from the complete genome analysis of an early methicillin-resistant Staphylococcus aureus strain and a biofilm-producing methicillin-resistant Staphylococcus epidermidis strain.</title>
        <authorList>
            <person name="Gill S.R."/>
            <person name="Fouts D.E."/>
            <person name="Archer G.L."/>
            <person name="Mongodin E.F."/>
            <person name="DeBoy R.T."/>
            <person name="Ravel J."/>
            <person name="Paulsen I.T."/>
            <person name="Kolonay J.F."/>
            <person name="Brinkac L.M."/>
            <person name="Beanan M.J."/>
            <person name="Dodson R.J."/>
            <person name="Daugherty S.C."/>
            <person name="Madupu R."/>
            <person name="Angiuoli S.V."/>
            <person name="Durkin A.S."/>
            <person name="Haft D.H."/>
            <person name="Vamathevan J.J."/>
            <person name="Khouri H."/>
            <person name="Utterback T.R."/>
            <person name="Lee C."/>
            <person name="Dimitrov G."/>
            <person name="Jiang L."/>
            <person name="Qin H."/>
            <person name="Weidman J."/>
            <person name="Tran K."/>
            <person name="Kang K.H."/>
            <person name="Hance I.R."/>
            <person name="Nelson K.E."/>
            <person name="Fraser C.M."/>
        </authorList>
    </citation>
    <scope>NUCLEOTIDE SEQUENCE [LARGE SCALE GENOMIC DNA]</scope>
    <source>
        <strain>COL</strain>
    </source>
</reference>
<evidence type="ECO:0000250" key="1"/>
<evidence type="ECO:0000255" key="2">
    <source>
        <dbReference type="PROSITE-ProRule" id="PRU00681"/>
    </source>
</evidence>
<evidence type="ECO:0000305" key="3"/>
<name>PTHP_STAAC</name>
<dbReference type="EMBL" id="CP000046">
    <property type="protein sequence ID" value="AAW37971.1"/>
    <property type="molecule type" value="Genomic_DNA"/>
</dbReference>
<dbReference type="RefSeq" id="WP_000437472.1">
    <property type="nucleotide sequence ID" value="NZ_JBGOFO010000002.1"/>
</dbReference>
<dbReference type="BMRB" id="Q5HH02"/>
<dbReference type="SMR" id="Q5HH02"/>
<dbReference type="KEGG" id="sac:SACOL1091"/>
<dbReference type="HOGENOM" id="CLU_136230_2_2_9"/>
<dbReference type="Proteomes" id="UP000000530">
    <property type="component" value="Chromosome"/>
</dbReference>
<dbReference type="GO" id="GO:0005737">
    <property type="term" value="C:cytoplasm"/>
    <property type="evidence" value="ECO:0007669"/>
    <property type="project" value="UniProtKB-SubCell"/>
</dbReference>
<dbReference type="GO" id="GO:0009401">
    <property type="term" value="P:phosphoenolpyruvate-dependent sugar phosphotransferase system"/>
    <property type="evidence" value="ECO:0007669"/>
    <property type="project" value="UniProtKB-KW"/>
</dbReference>
<dbReference type="CDD" id="cd00367">
    <property type="entry name" value="PTS-HPr_like"/>
    <property type="match status" value="1"/>
</dbReference>
<dbReference type="Gene3D" id="3.30.1340.10">
    <property type="entry name" value="HPr-like"/>
    <property type="match status" value="1"/>
</dbReference>
<dbReference type="InterPro" id="IPR050399">
    <property type="entry name" value="HPr"/>
</dbReference>
<dbReference type="InterPro" id="IPR000032">
    <property type="entry name" value="HPr-like"/>
</dbReference>
<dbReference type="InterPro" id="IPR035895">
    <property type="entry name" value="HPr-like_sf"/>
</dbReference>
<dbReference type="InterPro" id="IPR001020">
    <property type="entry name" value="PTS_HPr_His_P_site"/>
</dbReference>
<dbReference type="InterPro" id="IPR002114">
    <property type="entry name" value="PTS_HPr_Ser_P_site"/>
</dbReference>
<dbReference type="NCBIfam" id="NF010352">
    <property type="entry name" value="PRK13780.1"/>
    <property type="match status" value="1"/>
</dbReference>
<dbReference type="NCBIfam" id="TIGR01003">
    <property type="entry name" value="PTS_HPr_family"/>
    <property type="match status" value="1"/>
</dbReference>
<dbReference type="PANTHER" id="PTHR33705">
    <property type="entry name" value="PHOSPHOCARRIER PROTEIN HPR"/>
    <property type="match status" value="1"/>
</dbReference>
<dbReference type="PANTHER" id="PTHR33705:SF2">
    <property type="entry name" value="PHOSPHOCARRIER PROTEIN NPR"/>
    <property type="match status" value="1"/>
</dbReference>
<dbReference type="Pfam" id="PF00381">
    <property type="entry name" value="PTS-HPr"/>
    <property type="match status" value="1"/>
</dbReference>
<dbReference type="PRINTS" id="PR00107">
    <property type="entry name" value="PHOSPHOCPHPR"/>
</dbReference>
<dbReference type="SUPFAM" id="SSF55594">
    <property type="entry name" value="HPr-like"/>
    <property type="match status" value="1"/>
</dbReference>
<dbReference type="PROSITE" id="PS51350">
    <property type="entry name" value="PTS_HPR_DOM"/>
    <property type="match status" value="1"/>
</dbReference>
<dbReference type="PROSITE" id="PS00369">
    <property type="entry name" value="PTS_HPR_HIS"/>
    <property type="match status" value="1"/>
</dbReference>
<dbReference type="PROSITE" id="PS00589">
    <property type="entry name" value="PTS_HPR_SER"/>
    <property type="match status" value="1"/>
</dbReference>
<proteinExistence type="inferred from homology"/>
<protein>
    <recommendedName>
        <fullName>Phosphocarrier protein HPr</fullName>
    </recommendedName>
    <alternativeName>
        <fullName>Histidine-containing protein</fullName>
    </alternativeName>
</protein>
<feature type="chain" id="PRO_0000107872" description="Phosphocarrier protein HPr">
    <location>
        <begin position="1"/>
        <end position="88"/>
    </location>
</feature>
<feature type="domain" description="HPr" evidence="2">
    <location>
        <begin position="1"/>
        <end position="88"/>
    </location>
</feature>
<feature type="active site" description="Pros-phosphohistidine intermediate" evidence="2">
    <location>
        <position position="15"/>
    </location>
</feature>
<feature type="modified residue" description="Phosphoserine; by HPrK/P" evidence="2">
    <location>
        <position position="46"/>
    </location>
</feature>
<organism>
    <name type="scientific">Staphylococcus aureus (strain COL)</name>
    <dbReference type="NCBI Taxonomy" id="93062"/>
    <lineage>
        <taxon>Bacteria</taxon>
        <taxon>Bacillati</taxon>
        <taxon>Bacillota</taxon>
        <taxon>Bacilli</taxon>
        <taxon>Bacillales</taxon>
        <taxon>Staphylococcaceae</taxon>
        <taxon>Staphylococcus</taxon>
    </lineage>
</organism>
<keyword id="KW-0963">Cytoplasm</keyword>
<keyword id="KW-0597">Phosphoprotein</keyword>
<keyword id="KW-0598">Phosphotransferase system</keyword>
<keyword id="KW-0762">Sugar transport</keyword>
<keyword id="KW-0804">Transcription</keyword>
<keyword id="KW-0805">Transcription regulation</keyword>
<keyword id="KW-0813">Transport</keyword>
<accession>Q5HH02</accession>